<dbReference type="EC" id="2.9.1.3" evidence="1"/>
<dbReference type="EMBL" id="FM180568">
    <property type="protein sequence ID" value="CAS07985.1"/>
    <property type="molecule type" value="Genomic_DNA"/>
</dbReference>
<dbReference type="SMR" id="B7UKI1"/>
<dbReference type="KEGG" id="ecg:E2348C_0437"/>
<dbReference type="HOGENOM" id="CLU_043456_1_0_6"/>
<dbReference type="Proteomes" id="UP000008205">
    <property type="component" value="Chromosome"/>
</dbReference>
<dbReference type="GO" id="GO:0016765">
    <property type="term" value="F:transferase activity, transferring alkyl or aryl (other than methyl) groups"/>
    <property type="evidence" value="ECO:0007669"/>
    <property type="project" value="UniProtKB-UniRule"/>
</dbReference>
<dbReference type="GO" id="GO:0043828">
    <property type="term" value="F:tRNA 2-selenouridine synthase activity"/>
    <property type="evidence" value="ECO:0007669"/>
    <property type="project" value="UniProtKB-EC"/>
</dbReference>
<dbReference type="GO" id="GO:0002098">
    <property type="term" value="P:tRNA wobble uridine modification"/>
    <property type="evidence" value="ECO:0007669"/>
    <property type="project" value="UniProtKB-UniRule"/>
</dbReference>
<dbReference type="CDD" id="cd01520">
    <property type="entry name" value="RHOD_YbbB"/>
    <property type="match status" value="1"/>
</dbReference>
<dbReference type="FunFam" id="3.40.250.10:FF:000009">
    <property type="entry name" value="tRNA 2-selenouridine/geranyl-2-thiouridine synthase"/>
    <property type="match status" value="1"/>
</dbReference>
<dbReference type="Gene3D" id="3.40.250.10">
    <property type="entry name" value="Rhodanese-like domain"/>
    <property type="match status" value="1"/>
</dbReference>
<dbReference type="HAMAP" id="MF_01622">
    <property type="entry name" value="tRNA_sel_U_synth"/>
    <property type="match status" value="1"/>
</dbReference>
<dbReference type="InterPro" id="IPR001763">
    <property type="entry name" value="Rhodanese-like_dom"/>
</dbReference>
<dbReference type="InterPro" id="IPR036873">
    <property type="entry name" value="Rhodanese-like_dom_sf"/>
</dbReference>
<dbReference type="InterPro" id="IPR017582">
    <property type="entry name" value="SelU"/>
</dbReference>
<dbReference type="NCBIfam" id="NF008749">
    <property type="entry name" value="PRK11784.1-1"/>
    <property type="match status" value="1"/>
</dbReference>
<dbReference type="NCBIfam" id="NF008751">
    <property type="entry name" value="PRK11784.1-3"/>
    <property type="match status" value="1"/>
</dbReference>
<dbReference type="NCBIfam" id="TIGR03167">
    <property type="entry name" value="tRNA_sel_U_synt"/>
    <property type="match status" value="1"/>
</dbReference>
<dbReference type="PANTHER" id="PTHR30401">
    <property type="entry name" value="TRNA 2-SELENOURIDINE SYNTHASE"/>
    <property type="match status" value="1"/>
</dbReference>
<dbReference type="PANTHER" id="PTHR30401:SF0">
    <property type="entry name" value="TRNA 2-SELENOURIDINE SYNTHASE"/>
    <property type="match status" value="1"/>
</dbReference>
<dbReference type="Pfam" id="PF00581">
    <property type="entry name" value="Rhodanese"/>
    <property type="match status" value="1"/>
</dbReference>
<dbReference type="SMART" id="SM00450">
    <property type="entry name" value="RHOD"/>
    <property type="match status" value="1"/>
</dbReference>
<dbReference type="SUPFAM" id="SSF52821">
    <property type="entry name" value="Rhodanese/Cell cycle control phosphatase"/>
    <property type="match status" value="1"/>
</dbReference>
<dbReference type="PROSITE" id="PS50206">
    <property type="entry name" value="RHODANESE_3"/>
    <property type="match status" value="1"/>
</dbReference>
<sequence length="364" mass="41246">MQERHTEQDYRALLIADTPIIDVRAPIEFEQGAMPAAINLPLMNNDERAAVGICYKQQGSDAALAQGHKLVAGEIRQQRMDAWRAACLQNPHGILCCARGGQRSHIVQRWLHDAGIDYPLVEGGYKALRQTAIQATIELAQKPIVLIGGCTGSGKTLLVQQQPNGVDLEGLARHRGSAFGRTLQPQLSQASFENLLAAEMLKTDAHQDLRLWVLEDESRMIGSNHLPECLRERMTQATIAVVEDPFEIRLERLNEEYFLRMHHDFTHAYGDEQGWQEYCEYLHHGLSAIKRRLGLQRYNELAARLDAALTTQLTTGSTDGHLAWLVPLLEEYYDPMYRYQLEKKAEKVVFHGEWAEVAEWVKTQ</sequence>
<gene>
    <name evidence="1" type="primary">selU</name>
    <name type="ordered locus">E2348C_0437</name>
</gene>
<organism>
    <name type="scientific">Escherichia coli O127:H6 (strain E2348/69 / EPEC)</name>
    <dbReference type="NCBI Taxonomy" id="574521"/>
    <lineage>
        <taxon>Bacteria</taxon>
        <taxon>Pseudomonadati</taxon>
        <taxon>Pseudomonadota</taxon>
        <taxon>Gammaproteobacteria</taxon>
        <taxon>Enterobacterales</taxon>
        <taxon>Enterobacteriaceae</taxon>
        <taxon>Escherichia</taxon>
    </lineage>
</organism>
<proteinExistence type="inferred from homology"/>
<feature type="chain" id="PRO_1000186065" description="tRNA 2-selenouridine synthase">
    <location>
        <begin position="1"/>
        <end position="364"/>
    </location>
</feature>
<feature type="domain" description="Rhodanese" evidence="1">
    <location>
        <begin position="14"/>
        <end position="137"/>
    </location>
</feature>
<feature type="active site" description="S-selanylcysteine intermediate" evidence="1">
    <location>
        <position position="97"/>
    </location>
</feature>
<reference key="1">
    <citation type="journal article" date="2009" name="J. Bacteriol.">
        <title>Complete genome sequence and comparative genome analysis of enteropathogenic Escherichia coli O127:H6 strain E2348/69.</title>
        <authorList>
            <person name="Iguchi A."/>
            <person name="Thomson N.R."/>
            <person name="Ogura Y."/>
            <person name="Saunders D."/>
            <person name="Ooka T."/>
            <person name="Henderson I.R."/>
            <person name="Harris D."/>
            <person name="Asadulghani M."/>
            <person name="Kurokawa K."/>
            <person name="Dean P."/>
            <person name="Kenny B."/>
            <person name="Quail M.A."/>
            <person name="Thurston S."/>
            <person name="Dougan G."/>
            <person name="Hayashi T."/>
            <person name="Parkhill J."/>
            <person name="Frankel G."/>
        </authorList>
    </citation>
    <scope>NUCLEOTIDE SEQUENCE [LARGE SCALE GENOMIC DNA]</scope>
    <source>
        <strain>E2348/69 / EPEC</strain>
    </source>
</reference>
<accession>B7UKI1</accession>
<comment type="function">
    <text evidence="1">Involved in the post-transcriptional modification of the uridine at the wobble position (U34) of tRNA(Lys), tRNA(Glu) and tRNA(Gln). Catalyzes the conversion of 2-thiouridine (S2U-RNA) to 2-selenouridine (Se2U-RNA). Acts in a two-step process involving geranylation of 2-thiouridine (S2U) to S-geranyl-2-thiouridine (geS2U) and subsequent selenation of the latter derivative to 2-selenouridine (Se2U) in the tRNA chain.</text>
</comment>
<comment type="catalytic activity">
    <reaction evidence="1">
        <text>5-methylaminomethyl-2-thiouridine(34) in tRNA + selenophosphate + (2E)-geranyl diphosphate + H2O + H(+) = 5-methylaminomethyl-2-selenouridine(34) in tRNA + (2E)-thiogeraniol + phosphate + diphosphate</text>
        <dbReference type="Rhea" id="RHEA:42716"/>
        <dbReference type="Rhea" id="RHEA-COMP:10195"/>
        <dbReference type="Rhea" id="RHEA-COMP:10196"/>
        <dbReference type="ChEBI" id="CHEBI:15377"/>
        <dbReference type="ChEBI" id="CHEBI:15378"/>
        <dbReference type="ChEBI" id="CHEBI:16144"/>
        <dbReference type="ChEBI" id="CHEBI:33019"/>
        <dbReference type="ChEBI" id="CHEBI:43474"/>
        <dbReference type="ChEBI" id="CHEBI:58057"/>
        <dbReference type="ChEBI" id="CHEBI:74455"/>
        <dbReference type="ChEBI" id="CHEBI:82743"/>
        <dbReference type="ChEBI" id="CHEBI:143703"/>
        <dbReference type="EC" id="2.9.1.3"/>
    </reaction>
    <physiologicalReaction direction="left-to-right" evidence="1">
        <dbReference type="Rhea" id="RHEA:42717"/>
    </physiologicalReaction>
</comment>
<comment type="catalytic activity">
    <reaction evidence="1">
        <text>5-methylaminomethyl-2-thiouridine(34) in tRNA + (2E)-geranyl diphosphate = 5-methylaminomethyl-S-(2E)-geranyl-thiouridine(34) in tRNA + diphosphate</text>
        <dbReference type="Rhea" id="RHEA:14085"/>
        <dbReference type="Rhea" id="RHEA-COMP:10195"/>
        <dbReference type="Rhea" id="RHEA-COMP:14654"/>
        <dbReference type="ChEBI" id="CHEBI:33019"/>
        <dbReference type="ChEBI" id="CHEBI:58057"/>
        <dbReference type="ChEBI" id="CHEBI:74455"/>
        <dbReference type="ChEBI" id="CHEBI:140632"/>
    </reaction>
    <physiologicalReaction direction="left-to-right" evidence="1">
        <dbReference type="Rhea" id="RHEA:14086"/>
    </physiologicalReaction>
</comment>
<comment type="catalytic activity">
    <reaction evidence="1">
        <text>5-methylaminomethyl-S-(2E)-geranyl-thiouridine(34) in tRNA + selenophosphate + H(+) = 5-methylaminomethyl-2-(Se-phospho)selenouridine(34) in tRNA + (2E)-thiogeraniol</text>
        <dbReference type="Rhea" id="RHEA:60172"/>
        <dbReference type="Rhea" id="RHEA-COMP:14654"/>
        <dbReference type="Rhea" id="RHEA-COMP:15523"/>
        <dbReference type="ChEBI" id="CHEBI:15378"/>
        <dbReference type="ChEBI" id="CHEBI:16144"/>
        <dbReference type="ChEBI" id="CHEBI:140632"/>
        <dbReference type="ChEBI" id="CHEBI:143702"/>
        <dbReference type="ChEBI" id="CHEBI:143703"/>
    </reaction>
    <physiologicalReaction direction="left-to-right" evidence="1">
        <dbReference type="Rhea" id="RHEA:60173"/>
    </physiologicalReaction>
</comment>
<comment type="catalytic activity">
    <reaction evidence="1">
        <text>5-methylaminomethyl-2-(Se-phospho)selenouridine(34) in tRNA + H2O = 5-methylaminomethyl-2-selenouridine(34) in tRNA + phosphate</text>
        <dbReference type="Rhea" id="RHEA:60176"/>
        <dbReference type="Rhea" id="RHEA-COMP:10196"/>
        <dbReference type="Rhea" id="RHEA-COMP:15523"/>
        <dbReference type="ChEBI" id="CHEBI:15377"/>
        <dbReference type="ChEBI" id="CHEBI:43474"/>
        <dbReference type="ChEBI" id="CHEBI:82743"/>
        <dbReference type="ChEBI" id="CHEBI:143702"/>
    </reaction>
    <physiologicalReaction direction="left-to-right" evidence="1">
        <dbReference type="Rhea" id="RHEA:60177"/>
    </physiologicalReaction>
</comment>
<comment type="subunit">
    <text evidence="1">Monomer.</text>
</comment>
<comment type="similarity">
    <text evidence="1">Belongs to the SelU family.</text>
</comment>
<keyword id="KW-1185">Reference proteome</keyword>
<keyword id="KW-0711">Selenium</keyword>
<keyword id="KW-0808">Transferase</keyword>
<evidence type="ECO:0000255" key="1">
    <source>
        <dbReference type="HAMAP-Rule" id="MF_01622"/>
    </source>
</evidence>
<protein>
    <recommendedName>
        <fullName evidence="1">tRNA 2-selenouridine synthase</fullName>
        <ecNumber evidence="1">2.9.1.3</ecNumber>
    </recommendedName>
</protein>
<name>SELU_ECO27</name>